<name>RS3_PROA2</name>
<sequence length="251" mass="28693">MGQKVNPTGFRLGIIRDWTSRWYDDSPVIAEKLKQDHVIRNYVQARLKRERAGIAKIVIERTTKHIKINIFAARPGAVVGRKGEEINNLSQELSRITGREVKIDVIEVIKPEIEAQLIGENIAYQLENRVSFRRAMKQAIQQAMRAGAEGIRIRCAGRLGGVEIARSEQYKEGKIPLHTLRANVDYASVTAHTIAGAIGIKVWVYKGEVLVQRIDAIEEDELKKIKDRRGEQRSRGRDSRNRRRRKPRQTT</sequence>
<comment type="function">
    <text evidence="1">Binds the lower part of the 30S subunit head. Binds mRNA in the 70S ribosome, positioning it for translation.</text>
</comment>
<comment type="subunit">
    <text evidence="1">Part of the 30S ribosomal subunit. Forms a tight complex with proteins S10 and S14.</text>
</comment>
<comment type="similarity">
    <text evidence="1">Belongs to the universal ribosomal protein uS3 family.</text>
</comment>
<evidence type="ECO:0000255" key="1">
    <source>
        <dbReference type="HAMAP-Rule" id="MF_01309"/>
    </source>
</evidence>
<evidence type="ECO:0000256" key="2">
    <source>
        <dbReference type="SAM" id="MobiDB-lite"/>
    </source>
</evidence>
<evidence type="ECO:0000305" key="3"/>
<gene>
    <name evidence="1" type="primary">rpsC</name>
    <name type="ordered locus">Paes_2058</name>
</gene>
<keyword id="KW-0687">Ribonucleoprotein</keyword>
<keyword id="KW-0689">Ribosomal protein</keyword>
<keyword id="KW-0694">RNA-binding</keyword>
<keyword id="KW-0699">rRNA-binding</keyword>
<dbReference type="EMBL" id="CP001108">
    <property type="protein sequence ID" value="ACF47068.1"/>
    <property type="molecule type" value="Genomic_DNA"/>
</dbReference>
<dbReference type="RefSeq" id="WP_012506600.1">
    <property type="nucleotide sequence ID" value="NC_011059.1"/>
</dbReference>
<dbReference type="SMR" id="B4S5C2"/>
<dbReference type="STRING" id="290512.Paes_2058"/>
<dbReference type="KEGG" id="paa:Paes_2058"/>
<dbReference type="eggNOG" id="COG0092">
    <property type="taxonomic scope" value="Bacteria"/>
</dbReference>
<dbReference type="HOGENOM" id="CLU_058591_0_2_10"/>
<dbReference type="Proteomes" id="UP000002725">
    <property type="component" value="Chromosome"/>
</dbReference>
<dbReference type="GO" id="GO:0022627">
    <property type="term" value="C:cytosolic small ribosomal subunit"/>
    <property type="evidence" value="ECO:0007669"/>
    <property type="project" value="TreeGrafter"/>
</dbReference>
<dbReference type="GO" id="GO:0003729">
    <property type="term" value="F:mRNA binding"/>
    <property type="evidence" value="ECO:0007669"/>
    <property type="project" value="UniProtKB-UniRule"/>
</dbReference>
<dbReference type="GO" id="GO:0019843">
    <property type="term" value="F:rRNA binding"/>
    <property type="evidence" value="ECO:0007669"/>
    <property type="project" value="UniProtKB-UniRule"/>
</dbReference>
<dbReference type="GO" id="GO:0003735">
    <property type="term" value="F:structural constituent of ribosome"/>
    <property type="evidence" value="ECO:0007669"/>
    <property type="project" value="InterPro"/>
</dbReference>
<dbReference type="GO" id="GO:0006412">
    <property type="term" value="P:translation"/>
    <property type="evidence" value="ECO:0007669"/>
    <property type="project" value="UniProtKB-UniRule"/>
</dbReference>
<dbReference type="CDD" id="cd02412">
    <property type="entry name" value="KH-II_30S_S3"/>
    <property type="match status" value="1"/>
</dbReference>
<dbReference type="FunFam" id="3.30.300.20:FF:000001">
    <property type="entry name" value="30S ribosomal protein S3"/>
    <property type="match status" value="1"/>
</dbReference>
<dbReference type="Gene3D" id="3.30.300.20">
    <property type="match status" value="1"/>
</dbReference>
<dbReference type="Gene3D" id="3.30.1140.32">
    <property type="entry name" value="Ribosomal protein S3, C-terminal domain"/>
    <property type="match status" value="1"/>
</dbReference>
<dbReference type="HAMAP" id="MF_01309_B">
    <property type="entry name" value="Ribosomal_uS3_B"/>
    <property type="match status" value="1"/>
</dbReference>
<dbReference type="InterPro" id="IPR004087">
    <property type="entry name" value="KH_dom"/>
</dbReference>
<dbReference type="InterPro" id="IPR015946">
    <property type="entry name" value="KH_dom-like_a/b"/>
</dbReference>
<dbReference type="InterPro" id="IPR004044">
    <property type="entry name" value="KH_dom_type_2"/>
</dbReference>
<dbReference type="InterPro" id="IPR009019">
    <property type="entry name" value="KH_sf_prok-type"/>
</dbReference>
<dbReference type="InterPro" id="IPR036419">
    <property type="entry name" value="Ribosomal_S3_C_sf"/>
</dbReference>
<dbReference type="InterPro" id="IPR005704">
    <property type="entry name" value="Ribosomal_uS3_bac-typ"/>
</dbReference>
<dbReference type="InterPro" id="IPR001351">
    <property type="entry name" value="Ribosomal_uS3_C"/>
</dbReference>
<dbReference type="InterPro" id="IPR018280">
    <property type="entry name" value="Ribosomal_uS3_CS"/>
</dbReference>
<dbReference type="NCBIfam" id="TIGR01009">
    <property type="entry name" value="rpsC_bact"/>
    <property type="match status" value="1"/>
</dbReference>
<dbReference type="PANTHER" id="PTHR11760">
    <property type="entry name" value="30S/40S RIBOSOMAL PROTEIN S3"/>
    <property type="match status" value="1"/>
</dbReference>
<dbReference type="PANTHER" id="PTHR11760:SF19">
    <property type="entry name" value="SMALL RIBOSOMAL SUBUNIT PROTEIN US3C"/>
    <property type="match status" value="1"/>
</dbReference>
<dbReference type="Pfam" id="PF07650">
    <property type="entry name" value="KH_2"/>
    <property type="match status" value="1"/>
</dbReference>
<dbReference type="Pfam" id="PF00189">
    <property type="entry name" value="Ribosomal_S3_C"/>
    <property type="match status" value="1"/>
</dbReference>
<dbReference type="SMART" id="SM00322">
    <property type="entry name" value="KH"/>
    <property type="match status" value="1"/>
</dbReference>
<dbReference type="SUPFAM" id="SSF54814">
    <property type="entry name" value="Prokaryotic type KH domain (KH-domain type II)"/>
    <property type="match status" value="1"/>
</dbReference>
<dbReference type="SUPFAM" id="SSF54821">
    <property type="entry name" value="Ribosomal protein S3 C-terminal domain"/>
    <property type="match status" value="1"/>
</dbReference>
<dbReference type="PROSITE" id="PS50823">
    <property type="entry name" value="KH_TYPE_2"/>
    <property type="match status" value="1"/>
</dbReference>
<dbReference type="PROSITE" id="PS00548">
    <property type="entry name" value="RIBOSOMAL_S3"/>
    <property type="match status" value="1"/>
</dbReference>
<proteinExistence type="inferred from homology"/>
<accession>B4S5C2</accession>
<organism>
    <name type="scientific">Prosthecochloris aestuarii (strain DSM 271 / SK 413)</name>
    <dbReference type="NCBI Taxonomy" id="290512"/>
    <lineage>
        <taxon>Bacteria</taxon>
        <taxon>Pseudomonadati</taxon>
        <taxon>Chlorobiota</taxon>
        <taxon>Chlorobiia</taxon>
        <taxon>Chlorobiales</taxon>
        <taxon>Chlorobiaceae</taxon>
        <taxon>Prosthecochloris</taxon>
    </lineage>
</organism>
<protein>
    <recommendedName>
        <fullName evidence="1">Small ribosomal subunit protein uS3</fullName>
    </recommendedName>
    <alternativeName>
        <fullName evidence="3">30S ribosomal protein S3</fullName>
    </alternativeName>
</protein>
<reference key="1">
    <citation type="submission" date="2008-06" db="EMBL/GenBank/DDBJ databases">
        <title>Complete sequence of chromosome of Prosthecochloris aestuarii DSM 271.</title>
        <authorList>
            <consortium name="US DOE Joint Genome Institute"/>
            <person name="Lucas S."/>
            <person name="Copeland A."/>
            <person name="Lapidus A."/>
            <person name="Glavina del Rio T."/>
            <person name="Dalin E."/>
            <person name="Tice H."/>
            <person name="Bruce D."/>
            <person name="Goodwin L."/>
            <person name="Pitluck S."/>
            <person name="Schmutz J."/>
            <person name="Larimer F."/>
            <person name="Land M."/>
            <person name="Hauser L."/>
            <person name="Kyrpides N."/>
            <person name="Anderson I."/>
            <person name="Liu Z."/>
            <person name="Li T."/>
            <person name="Zhao F."/>
            <person name="Overmann J."/>
            <person name="Bryant D.A."/>
            <person name="Richardson P."/>
        </authorList>
    </citation>
    <scope>NUCLEOTIDE SEQUENCE [LARGE SCALE GENOMIC DNA]</scope>
    <source>
        <strain>DSM 271 / SK 413</strain>
    </source>
</reference>
<feature type="chain" id="PRO_1000141003" description="Small ribosomal subunit protein uS3">
    <location>
        <begin position="1"/>
        <end position="251"/>
    </location>
</feature>
<feature type="domain" description="KH type-2" evidence="1">
    <location>
        <begin position="39"/>
        <end position="109"/>
    </location>
</feature>
<feature type="region of interest" description="Disordered" evidence="2">
    <location>
        <begin position="222"/>
        <end position="251"/>
    </location>
</feature>
<feature type="compositionally biased region" description="Basic and acidic residues" evidence="2">
    <location>
        <begin position="222"/>
        <end position="239"/>
    </location>
</feature>
<feature type="compositionally biased region" description="Basic residues" evidence="2">
    <location>
        <begin position="240"/>
        <end position="251"/>
    </location>
</feature>